<dbReference type="EC" id="1.2.1.3"/>
<dbReference type="EMBL" id="D88309">
    <property type="protein sequence ID" value="BAA13586.1"/>
    <property type="molecule type" value="Genomic_DNA"/>
</dbReference>
<dbReference type="SMR" id="Q94688"/>
<dbReference type="UniPathway" id="UPA00780">
    <property type="reaction ID" value="UER00768"/>
</dbReference>
<dbReference type="GO" id="GO:0004029">
    <property type="term" value="F:aldehyde dehydrogenase (NAD+) activity"/>
    <property type="evidence" value="ECO:0007669"/>
    <property type="project" value="UniProtKB-EC"/>
</dbReference>
<dbReference type="GO" id="GO:0006068">
    <property type="term" value="P:ethanol catabolic process"/>
    <property type="evidence" value="ECO:0007669"/>
    <property type="project" value="UniProtKB-UniPathway"/>
</dbReference>
<dbReference type="FunFam" id="3.40.605.10:FF:000029">
    <property type="entry name" value="Aldehyde dehydrogenase, mitochondrial"/>
    <property type="match status" value="1"/>
</dbReference>
<dbReference type="FunFam" id="3.40.309.10:FF:000065">
    <property type="entry name" value="Aldehyde dehydrogenase3"/>
    <property type="match status" value="1"/>
</dbReference>
<dbReference type="Gene3D" id="3.40.605.10">
    <property type="entry name" value="Aldehyde Dehydrogenase, Chain A, domain 1"/>
    <property type="match status" value="1"/>
</dbReference>
<dbReference type="Gene3D" id="3.40.309.10">
    <property type="entry name" value="Aldehyde Dehydrogenase, Chain A, domain 2"/>
    <property type="match status" value="1"/>
</dbReference>
<dbReference type="InterPro" id="IPR016161">
    <property type="entry name" value="Ald_DH/histidinol_DH"/>
</dbReference>
<dbReference type="InterPro" id="IPR016163">
    <property type="entry name" value="Ald_DH_C"/>
</dbReference>
<dbReference type="InterPro" id="IPR016160">
    <property type="entry name" value="Ald_DH_CS_CYS"/>
</dbReference>
<dbReference type="InterPro" id="IPR029510">
    <property type="entry name" value="Ald_DH_CS_GLU"/>
</dbReference>
<dbReference type="InterPro" id="IPR016162">
    <property type="entry name" value="Ald_DH_N"/>
</dbReference>
<dbReference type="InterPro" id="IPR015590">
    <property type="entry name" value="Aldehyde_DH_dom"/>
</dbReference>
<dbReference type="PANTHER" id="PTHR11699">
    <property type="entry name" value="ALDEHYDE DEHYDROGENASE-RELATED"/>
    <property type="match status" value="1"/>
</dbReference>
<dbReference type="Pfam" id="PF00171">
    <property type="entry name" value="Aldedh"/>
    <property type="match status" value="1"/>
</dbReference>
<dbReference type="SUPFAM" id="SSF53720">
    <property type="entry name" value="ALDH-like"/>
    <property type="match status" value="1"/>
</dbReference>
<dbReference type="PROSITE" id="PS00070">
    <property type="entry name" value="ALDEHYDE_DEHYDR_CYS"/>
    <property type="match status" value="1"/>
</dbReference>
<dbReference type="PROSITE" id="PS00687">
    <property type="entry name" value="ALDEHYDE_DEHYDR_GLU"/>
    <property type="match status" value="1"/>
</dbReference>
<name>ALDH9_POLMI</name>
<evidence type="ECO:0000250" key="1"/>
<evidence type="ECO:0000255" key="2"/>
<evidence type="ECO:0000305" key="3"/>
<reference key="1">
    <citation type="journal article" date="1996" name="Mem. Fac. Sci. Kochi Univ. D Biol.">
        <title>Molecular cloning and expression of aldehyde dehydrogenases in the budding ascidian Polyandrocarpa misakiensis.</title>
        <authorList>
            <person name="Harafuji N."/>
            <person name="Miyashita S."/>
            <person name="Kawamura K."/>
            <person name="Fujiwara S."/>
        </authorList>
    </citation>
    <scope>NUCLEOTIDE SEQUENCE [GENOMIC DNA]</scope>
    <source>
        <strain>Ushimado</strain>
    </source>
</reference>
<proteinExistence type="inferred from homology"/>
<comment type="catalytic activity">
    <reaction>
        <text>an aldehyde + NAD(+) + H2O = a carboxylate + NADH + 2 H(+)</text>
        <dbReference type="Rhea" id="RHEA:16185"/>
        <dbReference type="ChEBI" id="CHEBI:15377"/>
        <dbReference type="ChEBI" id="CHEBI:15378"/>
        <dbReference type="ChEBI" id="CHEBI:17478"/>
        <dbReference type="ChEBI" id="CHEBI:29067"/>
        <dbReference type="ChEBI" id="CHEBI:57540"/>
        <dbReference type="ChEBI" id="CHEBI:57945"/>
        <dbReference type="EC" id="1.2.1.3"/>
    </reaction>
</comment>
<comment type="pathway">
    <text>Alcohol metabolism; ethanol degradation; acetate from ethanol: step 2/2.</text>
</comment>
<comment type="similarity">
    <text evidence="3">Belongs to the aldehyde dehydrogenase family.</text>
</comment>
<organism>
    <name type="scientific">Polyandrocarpa misakiensis</name>
    <name type="common">Tunicate</name>
    <dbReference type="NCBI Taxonomy" id="7723"/>
    <lineage>
        <taxon>Eukaryota</taxon>
        <taxon>Metazoa</taxon>
        <taxon>Chordata</taxon>
        <taxon>Tunicata</taxon>
        <taxon>Ascidiacea</taxon>
        <taxon>Stolidobranchia</taxon>
        <taxon>Styelidae</taxon>
        <taxon>Polyandrocarpa</taxon>
    </lineage>
</organism>
<feature type="chain" id="PRO_0000056431" description="Aldehyde dehydrogenase 9">
    <location>
        <begin position="1" status="less than"/>
        <end position="228" status="greater than"/>
    </location>
</feature>
<feature type="active site" evidence="2">
    <location>
        <position position="99"/>
    </location>
</feature>
<feature type="active site" evidence="2">
    <location>
        <position position="132"/>
    </location>
</feature>
<feature type="binding site" evidence="1">
    <location>
        <begin position="76"/>
        <end position="81"/>
    </location>
    <ligand>
        <name>NAD(+)</name>
        <dbReference type="ChEBI" id="CHEBI:57540"/>
    </ligand>
</feature>
<feature type="non-terminal residue">
    <location>
        <position position="1"/>
    </location>
</feature>
<feature type="non-terminal residue">
    <location>
        <position position="228"/>
    </location>
</feature>
<sequence length="228" mass="24460">FPLLMQAWKLGPALACGNTVVMKTAEQTPLTALYVAALAKEAGFPPGVINIISGYGPTAGAAISEHMDVDKVAFTGSTETAHIVMEAAAKSNLKRVSLELGGKSPMIVLADSDLDFAVDTCHHGLFFNMGQCCCAGSRIYVQEGVYDEFVKKSVERAKKRTVGDPFTEGIEQGPQIDTEQFNKINRMIEEGKQSGAKLLCGGKRWGDKGYYIEPTVFSDVPDDSTIGS</sequence>
<keyword id="KW-0520">NAD</keyword>
<keyword id="KW-0560">Oxidoreductase</keyword>
<gene>
    <name type="primary">ALDH9</name>
</gene>
<protein>
    <recommendedName>
        <fullName>Aldehyde dehydrogenase 9</fullName>
        <ecNumber>1.2.1.3</ecNumber>
    </recommendedName>
    <alternativeName>
        <fullName>PM-ALDH9</fullName>
    </alternativeName>
</protein>
<accession>Q94688</accession>